<comment type="function">
    <text evidence="4">Catalyzes the oxidation of D-sorbitol (D-glucitol) to D-fructose. Can also catalyze the oxidation of galactitol to D-tagatose and the oxidation of L-iditol, with lower efficiency.</text>
</comment>
<comment type="catalytic activity">
    <reaction evidence="4">
        <text>keto-D-fructose + NADH + H(+) = D-sorbitol + NAD(+)</text>
        <dbReference type="Rhea" id="RHEA:33031"/>
        <dbReference type="ChEBI" id="CHEBI:15378"/>
        <dbReference type="ChEBI" id="CHEBI:17924"/>
        <dbReference type="ChEBI" id="CHEBI:48095"/>
        <dbReference type="ChEBI" id="CHEBI:57540"/>
        <dbReference type="ChEBI" id="CHEBI:57945"/>
    </reaction>
    <physiologicalReaction direction="right-to-left" evidence="7">
        <dbReference type="Rhea" id="RHEA:33033"/>
    </physiologicalReaction>
</comment>
<comment type="catalytic activity">
    <reaction evidence="4">
        <text>galactitol + NAD(+) = keto-D-tagatose + NADH + H(+)</text>
        <dbReference type="Rhea" id="RHEA:20685"/>
        <dbReference type="ChEBI" id="CHEBI:15378"/>
        <dbReference type="ChEBI" id="CHEBI:16813"/>
        <dbReference type="ChEBI" id="CHEBI:47693"/>
        <dbReference type="ChEBI" id="CHEBI:57540"/>
        <dbReference type="ChEBI" id="CHEBI:57945"/>
        <dbReference type="EC" id="1.1.1.16"/>
    </reaction>
    <physiologicalReaction direction="left-to-right" evidence="7">
        <dbReference type="Rhea" id="RHEA:20686"/>
    </physiologicalReaction>
</comment>
<comment type="catalytic activity">
    <reaction evidence="7">
        <text>L-iditol + NAD(+) = keto-L-sorbose + NADH + H(+)</text>
        <dbReference type="Rhea" id="RHEA:10160"/>
        <dbReference type="ChEBI" id="CHEBI:13172"/>
        <dbReference type="ChEBI" id="CHEBI:15378"/>
        <dbReference type="ChEBI" id="CHEBI:18202"/>
        <dbReference type="ChEBI" id="CHEBI:57540"/>
        <dbReference type="ChEBI" id="CHEBI:57945"/>
        <dbReference type="EC" id="1.1.1.14"/>
    </reaction>
    <physiologicalReaction direction="left-to-right" evidence="7">
        <dbReference type="Rhea" id="RHEA:10161"/>
    </physiologicalReaction>
</comment>
<comment type="activity regulation">
    <text evidence="4">Inhibited by DTT, N-bromosuccinimide and iodoacetic acid.</text>
</comment>
<comment type="biophysicochemical properties">
    <kinetics>
        <KM evidence="4">6.2 mM for D-sorbitol</KM>
        <KM evidence="4">1.5 mM for galactitol</KM>
        <KM evidence="4">0.06 mM for NAD(+) (in the presence of D-sorbitol)</KM>
        <KM evidence="4">160 mM for D-fructose</KM>
        <KM evidence="4">13 mM for D-tagatose</KM>
        <KM evidence="4">0.13 mM for NADH (in the presence of D-fructose)</KM>
    </kinetics>
    <phDependence>
        <text evidence="4">Optimum pH is 11 for substrate oxidation and 6.0-7.2 for sugar reduction.</text>
    </phDependence>
</comment>
<comment type="subunit">
    <text evidence="3 4">Homodimer (PubMed:7551049). May function as a tetramer in vivo (PubMed:15805591).</text>
</comment>
<comment type="induction">
    <text evidence="4">Induced by growth on D-sorbitol.</text>
</comment>
<comment type="similarity">
    <text evidence="6">Belongs to the short-chain dehydrogenases/reductases (SDR) family.</text>
</comment>
<evidence type="ECO:0000250" key="1">
    <source>
        <dbReference type="UniProtKB" id="Q9ZNN8"/>
    </source>
</evidence>
<evidence type="ECO:0000255" key="2">
    <source>
        <dbReference type="PROSITE-ProRule" id="PRU10001"/>
    </source>
</evidence>
<evidence type="ECO:0000269" key="3">
    <source>
    </source>
</evidence>
<evidence type="ECO:0000269" key="4">
    <source>
    </source>
</evidence>
<evidence type="ECO:0000303" key="5">
    <source>
    </source>
</evidence>
<evidence type="ECO:0000305" key="6"/>
<evidence type="ECO:0000305" key="7">
    <source>
    </source>
</evidence>
<evidence type="ECO:0007829" key="8">
    <source>
        <dbReference type="PDB" id="1K2W"/>
    </source>
</evidence>
<proteinExistence type="evidence at protein level"/>
<feature type="chain" id="PRO_0000054655" description="Sorbitol dehydrogenase">
    <location>
        <begin position="1"/>
        <end position="256"/>
    </location>
</feature>
<feature type="active site" description="Proton acceptor" evidence="2">
    <location>
        <position position="152"/>
    </location>
</feature>
<feature type="binding site" evidence="1">
    <location>
        <begin position="15"/>
        <end position="17"/>
    </location>
    <ligand>
        <name>NAD(+)</name>
        <dbReference type="ChEBI" id="CHEBI:57540"/>
    </ligand>
</feature>
<feature type="binding site" evidence="1">
    <location>
        <position position="36"/>
    </location>
    <ligand>
        <name>NAD(+)</name>
        <dbReference type="ChEBI" id="CHEBI:57540"/>
    </ligand>
</feature>
<feature type="binding site" evidence="1">
    <location>
        <begin position="59"/>
        <end position="60"/>
    </location>
    <ligand>
        <name>NAD(+)</name>
        <dbReference type="ChEBI" id="CHEBI:57540"/>
    </ligand>
</feature>
<feature type="binding site" evidence="1">
    <location>
        <position position="86"/>
    </location>
    <ligand>
        <name>NAD(+)</name>
        <dbReference type="ChEBI" id="CHEBI:57540"/>
    </ligand>
</feature>
<feature type="binding site" evidence="1">
    <location>
        <position position="152"/>
    </location>
    <ligand>
        <name>NAD(+)</name>
        <dbReference type="ChEBI" id="CHEBI:57540"/>
    </ligand>
</feature>
<feature type="binding site" evidence="1">
    <location>
        <position position="156"/>
    </location>
    <ligand>
        <name>NAD(+)</name>
        <dbReference type="ChEBI" id="CHEBI:57540"/>
    </ligand>
</feature>
<feature type="binding site" evidence="1">
    <location>
        <begin position="182"/>
        <end position="187"/>
    </location>
    <ligand>
        <name>NAD(+)</name>
        <dbReference type="ChEBI" id="CHEBI:57540"/>
    </ligand>
</feature>
<feature type="turn" evidence="8">
    <location>
        <begin position="2"/>
        <end position="5"/>
    </location>
</feature>
<feature type="strand" evidence="8">
    <location>
        <begin position="6"/>
        <end position="11"/>
    </location>
</feature>
<feature type="helix" evidence="8">
    <location>
        <begin position="16"/>
        <end position="27"/>
    </location>
</feature>
<feature type="strand" evidence="8">
    <location>
        <begin position="30"/>
        <end position="37"/>
    </location>
</feature>
<feature type="helix" evidence="8">
    <location>
        <begin position="39"/>
        <end position="49"/>
    </location>
</feature>
<feature type="strand" evidence="8">
    <location>
        <begin position="53"/>
        <end position="57"/>
    </location>
</feature>
<feature type="helix" evidence="8">
    <location>
        <begin position="63"/>
        <end position="77"/>
    </location>
</feature>
<feature type="strand" evidence="8">
    <location>
        <begin position="82"/>
        <end position="85"/>
    </location>
</feature>
<feature type="helix" evidence="8">
    <location>
        <begin position="95"/>
        <end position="97"/>
    </location>
</feature>
<feature type="helix" evidence="8">
    <location>
        <begin position="100"/>
        <end position="110"/>
    </location>
</feature>
<feature type="helix" evidence="8">
    <location>
        <begin position="112"/>
        <end position="128"/>
    </location>
</feature>
<feature type="strand" evidence="8">
    <location>
        <begin position="132"/>
        <end position="137"/>
    </location>
</feature>
<feature type="helix" evidence="8">
    <location>
        <begin position="140"/>
        <end position="142"/>
    </location>
</feature>
<feature type="helix" evidence="8">
    <location>
        <begin position="150"/>
        <end position="170"/>
    </location>
</feature>
<feature type="helix" evidence="8">
    <location>
        <begin position="171"/>
        <end position="173"/>
    </location>
</feature>
<feature type="strand" evidence="8">
    <location>
        <begin position="175"/>
        <end position="182"/>
    </location>
</feature>
<feature type="helix" evidence="8">
    <location>
        <begin position="190"/>
        <end position="201"/>
    </location>
</feature>
<feature type="helix" evidence="8">
    <location>
        <begin position="207"/>
        <end position="215"/>
    </location>
</feature>
<feature type="helix" evidence="8">
    <location>
        <begin position="224"/>
        <end position="233"/>
    </location>
</feature>
<feature type="helix" evidence="8">
    <location>
        <begin position="237"/>
        <end position="239"/>
    </location>
</feature>
<feature type="strand" evidence="8">
    <location>
        <begin position="246"/>
        <end position="250"/>
    </location>
</feature>
<accession>Q59787</accession>
<dbReference type="EC" id="1.1.1.-" evidence="4"/>
<dbReference type="EC" id="1.1.1.16" evidence="4"/>
<dbReference type="EC" id="1.1.1.14" evidence="7"/>
<dbReference type="EMBL" id="AF018073">
    <property type="protein sequence ID" value="AAC45770.1"/>
    <property type="molecule type" value="Genomic_DNA"/>
</dbReference>
<dbReference type="PDB" id="1K2W">
    <property type="method" value="X-ray"/>
    <property type="resolution" value="2.40 A"/>
    <property type="chains" value="A/B=1-256"/>
</dbReference>
<dbReference type="PDBsum" id="1K2W"/>
<dbReference type="SMR" id="Q59787"/>
<dbReference type="EvolutionaryTrace" id="Q59787"/>
<dbReference type="GO" id="GO:0047713">
    <property type="term" value="F:galactitol 2-dehydrogenase activity"/>
    <property type="evidence" value="ECO:0000314"/>
    <property type="project" value="UniProtKB"/>
</dbReference>
<dbReference type="GO" id="GO:0003939">
    <property type="term" value="F:L-iditol 2-dehydrogenase (NAD+) activity"/>
    <property type="evidence" value="ECO:0000314"/>
    <property type="project" value="UniProtKB"/>
</dbReference>
<dbReference type="CDD" id="cd05363">
    <property type="entry name" value="SDH_SDR_c"/>
    <property type="match status" value="1"/>
</dbReference>
<dbReference type="FunFam" id="3.40.50.720:FF:000536">
    <property type="entry name" value="Sorbitol dehydrogenase"/>
    <property type="match status" value="1"/>
</dbReference>
<dbReference type="Gene3D" id="3.40.50.720">
    <property type="entry name" value="NAD(P)-binding Rossmann-like Domain"/>
    <property type="match status" value="1"/>
</dbReference>
<dbReference type="InterPro" id="IPR036291">
    <property type="entry name" value="NAD(P)-bd_dom_sf"/>
</dbReference>
<dbReference type="InterPro" id="IPR020904">
    <property type="entry name" value="Sc_DH/Rdtase_CS"/>
</dbReference>
<dbReference type="InterPro" id="IPR002347">
    <property type="entry name" value="SDR_fam"/>
</dbReference>
<dbReference type="NCBIfam" id="NF005472">
    <property type="entry name" value="PRK07067.1"/>
    <property type="match status" value="1"/>
</dbReference>
<dbReference type="NCBIfam" id="NF005559">
    <property type="entry name" value="PRK07231.1"/>
    <property type="match status" value="1"/>
</dbReference>
<dbReference type="PANTHER" id="PTHR42760:SF115">
    <property type="entry name" value="3-OXOACYL-[ACYL-CARRIER-PROTEIN] REDUCTASE FABG"/>
    <property type="match status" value="1"/>
</dbReference>
<dbReference type="PANTHER" id="PTHR42760">
    <property type="entry name" value="SHORT-CHAIN DEHYDROGENASES/REDUCTASES FAMILY MEMBER"/>
    <property type="match status" value="1"/>
</dbReference>
<dbReference type="Pfam" id="PF13561">
    <property type="entry name" value="adh_short_C2"/>
    <property type="match status" value="1"/>
</dbReference>
<dbReference type="PRINTS" id="PR00081">
    <property type="entry name" value="GDHRDH"/>
</dbReference>
<dbReference type="PRINTS" id="PR00080">
    <property type="entry name" value="SDRFAMILY"/>
</dbReference>
<dbReference type="SMART" id="SM00822">
    <property type="entry name" value="PKS_KR"/>
    <property type="match status" value="1"/>
</dbReference>
<dbReference type="SUPFAM" id="SSF51735">
    <property type="entry name" value="NAD(P)-binding Rossmann-fold domains"/>
    <property type="match status" value="1"/>
</dbReference>
<dbReference type="PROSITE" id="PS00061">
    <property type="entry name" value="ADH_SHORT"/>
    <property type="match status" value="1"/>
</dbReference>
<keyword id="KW-0002">3D-structure</keyword>
<keyword id="KW-0119">Carbohydrate metabolism</keyword>
<keyword id="KW-0903">Direct protein sequencing</keyword>
<keyword id="KW-0520">NAD</keyword>
<keyword id="KW-0560">Oxidoreductase</keyword>
<gene>
    <name type="primary">polS</name>
    <name type="synonym">smoS</name>
</gene>
<sequence>MRLDGKTALITGSARGIGRAFAEAYVREGARVAIADINLEAARATAAEIGPAACAIALDVTDQASIDRCVAELLDRWGSIDILVNNAALFDLAPIVEITRESYDRLFAINVSGTLFMMQAVARAMIAGGRGGKIINMASQAGRRGEALVGVYCATKAAVISLTQSAGLNLIRHGINVNAIAPGVVDGEHWDGVDAKFADYENLPRGEKKRQVGAAVPFGRMGRAEDLTGMAIFLATPEADYIVAQTYNVDGGNWMS</sequence>
<protein>
    <recommendedName>
        <fullName evidence="5">Sorbitol dehydrogenase</fullName>
        <shortName evidence="5">SDH</shortName>
        <ecNumber evidence="4">1.1.1.-</ecNumber>
    </recommendedName>
    <alternativeName>
        <fullName evidence="6">Galactitol 2-dehydrogenase</fullName>
        <ecNumber evidence="4">1.1.1.16</ecNumber>
    </alternativeName>
    <alternativeName>
        <fullName evidence="6">L-iditol 2-dehydrogenase</fullName>
        <ecNumber evidence="7">1.1.1.14</ecNumber>
    </alternativeName>
    <alternativeName>
        <fullName evidence="5">Polyol dehydrogenase</fullName>
    </alternativeName>
</protein>
<name>SDH_CERSP</name>
<reference key="1">
    <citation type="journal article" date="1995" name="Microbiology">
        <title>Polyol metabolism of Rhodobacter sphaeroides: biochemical characterization of a short-chain sorbitol dehydrogenase.</title>
        <authorList>
            <person name="Schauder S."/>
            <person name="Schneider K.-H."/>
            <person name="Giffhorn F."/>
        </authorList>
    </citation>
    <scope>NUCLEOTIDE SEQUENCE [GENOMIC DNA]</scope>
    <scope>PARTIAL PROTEIN SEQUENCE</scope>
    <scope>FUNCTION</scope>
    <scope>CATALYTIC ACTIVITY</scope>
    <scope>ACTIVITY REGULATION</scope>
    <scope>BIOPHYSICOCHEMICAL PROPERTIES</scope>
    <scope>SUBUNIT</scope>
    <scope>INDUCTION</scope>
    <source>
        <strain>DSM 8371 / Si4</strain>
    </source>
</reference>
<reference key="2">
    <citation type="journal article" date="2005" name="Acta Crystallogr. D">
        <title>Structure of zinc-independent sorbitol dehydrogenase from Rhodobacter sphaeroides at 2.4 A resolution.</title>
        <authorList>
            <person name="Philippsen A."/>
            <person name="Schirmer T."/>
            <person name="Stein M.A."/>
            <person name="Giffhorn F."/>
            <person name="Stetefeld J."/>
        </authorList>
    </citation>
    <scope>X-RAY CRYSTALLOGRAPHY (2.4 ANGSTROMS)</scope>
    <scope>SUBUNIT</scope>
</reference>
<organism>
    <name type="scientific">Cereibacter sphaeroides</name>
    <name type="common">Rhodobacter sphaeroides</name>
    <dbReference type="NCBI Taxonomy" id="1063"/>
    <lineage>
        <taxon>Bacteria</taxon>
        <taxon>Pseudomonadati</taxon>
        <taxon>Pseudomonadota</taxon>
        <taxon>Alphaproteobacteria</taxon>
        <taxon>Rhodobacterales</taxon>
        <taxon>Paracoccaceae</taxon>
        <taxon>Cereibacter</taxon>
    </lineage>
</organism>